<proteinExistence type="evidence at protein level"/>
<name>RBM10_HUMAN</name>
<sequence>MEYERRGGRGDRTGRYGATDRSQDDGGENRSRDHDYRDMDYRSYPREYGSQEGKHDYDDSSEEQSAEDSYEASPGSETQRRRRRRHRHSPTGPPGFPRDGDYRDQDYRTEQGEEEEEEEDEEEEEKASNIVMLRMLPQAATEDDIRGQLQSHGVQAREVRLMRNKSSGQSRGFAFVEFSHLQDATRWMEANQHSLNILGQKVSMHYSDPKPKINEDWLCNKCGVQNFKRREKCFKCGVPKSEAEQKLPLGTRLDQQTLPLGGRELSQGLLPLPQPYQAQGVLASQALSQGSEPSSENANDTIILRNLNPHSTMDSILGALAPYAVLSSSNVRVIKDKQTQLNRGFAFIQLSTIVEAAQLLQILQALHPPLTIDGKTINVEFAKGSKRDMASNEGSRISAASVASTAIAAAQWAISQASQGGEGTWATSEEPPVDYSYYQQDEGYGNSQGTESSLYAHGYLKGTKGPGITGTKGDPTGAGPEASLEPGADSVSMQAFSRAQPGAAPGIYQQSAEASSSQGTAANSQSYTIMSPAVLKSELQSPTHPSSALPPATSPTAQESYSQYPVPDVSTYQYDETSGYYYDPQTGLYYDPNSQYYYNAQSQQYLYWDGERRTYVPALEQSADGHKETGAPSKEGKEKKEKHKTKTAQQIAKDMERWARSLNKQKENFKNSFQPISSLRDDERRESATADAGYAILEKKGALAERQHTSMDLPKLASDDRPSPPRGLVAAYSGESDSEEEQERGGPEREEKLTDWQKLACLLCRRQFPSKEALIRHQQLSGLHKQNLEIHRRAHLSENELEALEKNDMEQMKYRDRAAERREKYGIPEPPEPKRRKYGGISTASVDFEQPTRDGLGSDNIGSRMLQAMGWKEGSGLGRKKQGIVTPIEAQTRVRGSGLGARGSSYGVTSTESYKETLHKTMVTRFNEAQ</sequence>
<protein>
    <recommendedName>
        <fullName evidence="16">RNA-binding protein 10</fullName>
    </recommendedName>
    <alternativeName>
        <fullName>G patch domain-containing protein 9</fullName>
    </alternativeName>
    <alternativeName>
        <fullName>RNA-binding motif protein 10</fullName>
    </alternativeName>
    <alternativeName>
        <fullName evidence="1">RNA-binding protein S1-1</fullName>
        <shortName>S1-1</shortName>
    </alternativeName>
</protein>
<keyword id="KW-0002">3D-structure</keyword>
<keyword id="KW-0007">Acetylation</keyword>
<keyword id="KW-0024">Alternative initiation</keyword>
<keyword id="KW-0025">Alternative splicing</keyword>
<keyword id="KW-0479">Metal-binding</keyword>
<keyword id="KW-0488">Methylation</keyword>
<keyword id="KW-0507">mRNA processing</keyword>
<keyword id="KW-0508">mRNA splicing</keyword>
<keyword id="KW-0539">Nucleus</keyword>
<keyword id="KW-0597">Phosphoprotein</keyword>
<keyword id="KW-1267">Proteomics identification</keyword>
<keyword id="KW-1185">Reference proteome</keyword>
<keyword id="KW-0677">Repeat</keyword>
<keyword id="KW-0694">RNA-binding</keyword>
<keyword id="KW-0862">Zinc</keyword>
<keyword id="KW-0863">Zinc-finger</keyword>
<reference key="1">
    <citation type="journal article" date="1995" name="DNA Res.">
        <title>Prediction of the coding sequences of unidentified human genes. IV. The coding sequences of 40 new genes (KIAA0121-KIAA0160) deduced by analysis of cDNA clones from human cell line KG-1.</title>
        <authorList>
            <person name="Nagase T."/>
            <person name="Seki N."/>
            <person name="Tanaka A."/>
            <person name="Ishikawa K."/>
            <person name="Nomura N."/>
        </authorList>
    </citation>
    <scope>NUCLEOTIDE SEQUENCE [LARGE SCALE MRNA] (ISOFORM 2)</scope>
    <source>
        <tissue>Bone marrow</tissue>
    </source>
</reference>
<reference key="2">
    <citation type="journal article" date="2004" name="Nat. Genet.">
        <title>Complete sequencing and characterization of 21,243 full-length human cDNAs.</title>
        <authorList>
            <person name="Ota T."/>
            <person name="Suzuki Y."/>
            <person name="Nishikawa T."/>
            <person name="Otsuki T."/>
            <person name="Sugiyama T."/>
            <person name="Irie R."/>
            <person name="Wakamatsu A."/>
            <person name="Hayashi K."/>
            <person name="Sato H."/>
            <person name="Nagai K."/>
            <person name="Kimura K."/>
            <person name="Makita H."/>
            <person name="Sekine M."/>
            <person name="Obayashi M."/>
            <person name="Nishi T."/>
            <person name="Shibahara T."/>
            <person name="Tanaka T."/>
            <person name="Ishii S."/>
            <person name="Yamamoto J."/>
            <person name="Saito K."/>
            <person name="Kawai Y."/>
            <person name="Isono Y."/>
            <person name="Nakamura Y."/>
            <person name="Nagahari K."/>
            <person name="Murakami K."/>
            <person name="Yasuda T."/>
            <person name="Iwayanagi T."/>
            <person name="Wagatsuma M."/>
            <person name="Shiratori A."/>
            <person name="Sudo H."/>
            <person name="Hosoiri T."/>
            <person name="Kaku Y."/>
            <person name="Kodaira H."/>
            <person name="Kondo H."/>
            <person name="Sugawara M."/>
            <person name="Takahashi M."/>
            <person name="Kanda K."/>
            <person name="Yokoi T."/>
            <person name="Furuya T."/>
            <person name="Kikkawa E."/>
            <person name="Omura Y."/>
            <person name="Abe K."/>
            <person name="Kamihara K."/>
            <person name="Katsuta N."/>
            <person name="Sato K."/>
            <person name="Tanikawa M."/>
            <person name="Yamazaki M."/>
            <person name="Ninomiya K."/>
            <person name="Ishibashi T."/>
            <person name="Yamashita H."/>
            <person name="Murakawa K."/>
            <person name="Fujimori K."/>
            <person name="Tanai H."/>
            <person name="Kimata M."/>
            <person name="Watanabe M."/>
            <person name="Hiraoka S."/>
            <person name="Chiba Y."/>
            <person name="Ishida S."/>
            <person name="Ono Y."/>
            <person name="Takiguchi S."/>
            <person name="Watanabe S."/>
            <person name="Yosida M."/>
            <person name="Hotuta T."/>
            <person name="Kusano J."/>
            <person name="Kanehori K."/>
            <person name="Takahashi-Fujii A."/>
            <person name="Hara H."/>
            <person name="Tanase T.-O."/>
            <person name="Nomura Y."/>
            <person name="Togiya S."/>
            <person name="Komai F."/>
            <person name="Hara R."/>
            <person name="Takeuchi K."/>
            <person name="Arita M."/>
            <person name="Imose N."/>
            <person name="Musashino K."/>
            <person name="Yuuki H."/>
            <person name="Oshima A."/>
            <person name="Sasaki N."/>
            <person name="Aotsuka S."/>
            <person name="Yoshikawa Y."/>
            <person name="Matsunawa H."/>
            <person name="Ichihara T."/>
            <person name="Shiohata N."/>
            <person name="Sano S."/>
            <person name="Moriya S."/>
            <person name="Momiyama H."/>
            <person name="Satoh N."/>
            <person name="Takami S."/>
            <person name="Terashima Y."/>
            <person name="Suzuki O."/>
            <person name="Nakagawa S."/>
            <person name="Senoh A."/>
            <person name="Mizoguchi H."/>
            <person name="Goto Y."/>
            <person name="Shimizu F."/>
            <person name="Wakebe H."/>
            <person name="Hishigaki H."/>
            <person name="Watanabe T."/>
            <person name="Sugiyama A."/>
            <person name="Takemoto M."/>
            <person name="Kawakami B."/>
            <person name="Yamazaki M."/>
            <person name="Watanabe K."/>
            <person name="Kumagai A."/>
            <person name="Itakura S."/>
            <person name="Fukuzumi Y."/>
            <person name="Fujimori Y."/>
            <person name="Komiyama M."/>
            <person name="Tashiro H."/>
            <person name="Tanigami A."/>
            <person name="Fujiwara T."/>
            <person name="Ono T."/>
            <person name="Yamada K."/>
            <person name="Fujii Y."/>
            <person name="Ozaki K."/>
            <person name="Hirao M."/>
            <person name="Ohmori Y."/>
            <person name="Kawabata A."/>
            <person name="Hikiji T."/>
            <person name="Kobatake N."/>
            <person name="Inagaki H."/>
            <person name="Ikema Y."/>
            <person name="Okamoto S."/>
            <person name="Okitani R."/>
            <person name="Kawakami T."/>
            <person name="Noguchi S."/>
            <person name="Itoh T."/>
            <person name="Shigeta K."/>
            <person name="Senba T."/>
            <person name="Matsumura K."/>
            <person name="Nakajima Y."/>
            <person name="Mizuno T."/>
            <person name="Morinaga M."/>
            <person name="Sasaki M."/>
            <person name="Togashi T."/>
            <person name="Oyama M."/>
            <person name="Hata H."/>
            <person name="Watanabe M."/>
            <person name="Komatsu T."/>
            <person name="Mizushima-Sugano J."/>
            <person name="Satoh T."/>
            <person name="Shirai Y."/>
            <person name="Takahashi Y."/>
            <person name="Nakagawa K."/>
            <person name="Okumura K."/>
            <person name="Nagase T."/>
            <person name="Nomura N."/>
            <person name="Kikuchi H."/>
            <person name="Masuho Y."/>
            <person name="Yamashita R."/>
            <person name="Nakai K."/>
            <person name="Yada T."/>
            <person name="Nakamura Y."/>
            <person name="Ohara O."/>
            <person name="Isogai T."/>
            <person name="Sugano S."/>
        </authorList>
    </citation>
    <scope>NUCLEOTIDE SEQUENCE [LARGE SCALE MRNA] (ISOFORM 3)</scope>
    <source>
        <tissue>Liver</tissue>
    </source>
</reference>
<reference key="3">
    <citation type="journal article" date="2007" name="BMC Genomics">
        <title>The full-ORF clone resource of the German cDNA consortium.</title>
        <authorList>
            <person name="Bechtel S."/>
            <person name="Rosenfelder H."/>
            <person name="Duda A."/>
            <person name="Schmidt C.P."/>
            <person name="Ernst U."/>
            <person name="Wellenreuther R."/>
            <person name="Mehrle A."/>
            <person name="Schuster C."/>
            <person name="Bahr A."/>
            <person name="Bloecker H."/>
            <person name="Heubner D."/>
            <person name="Hoerlein A."/>
            <person name="Michel G."/>
            <person name="Wedler H."/>
            <person name="Koehrer K."/>
            <person name="Ottenwaelder B."/>
            <person name="Poustka A."/>
            <person name="Wiemann S."/>
            <person name="Schupp I."/>
        </authorList>
    </citation>
    <scope>NUCLEOTIDE SEQUENCE [LARGE SCALE MRNA] (ISOFORM 1)</scope>
    <source>
        <tissue>Testis</tissue>
    </source>
</reference>
<reference key="4">
    <citation type="journal article" date="2005" name="Nature">
        <title>The DNA sequence of the human X chromosome.</title>
        <authorList>
            <person name="Ross M.T."/>
            <person name="Grafham D.V."/>
            <person name="Coffey A.J."/>
            <person name="Scherer S."/>
            <person name="McLay K."/>
            <person name="Muzny D."/>
            <person name="Platzer M."/>
            <person name="Howell G.R."/>
            <person name="Burrows C."/>
            <person name="Bird C.P."/>
            <person name="Frankish A."/>
            <person name="Lovell F.L."/>
            <person name="Howe K.L."/>
            <person name="Ashurst J.L."/>
            <person name="Fulton R.S."/>
            <person name="Sudbrak R."/>
            <person name="Wen G."/>
            <person name="Jones M.C."/>
            <person name="Hurles M.E."/>
            <person name="Andrews T.D."/>
            <person name="Scott C.E."/>
            <person name="Searle S."/>
            <person name="Ramser J."/>
            <person name="Whittaker A."/>
            <person name="Deadman R."/>
            <person name="Carter N.P."/>
            <person name="Hunt S.E."/>
            <person name="Chen R."/>
            <person name="Cree A."/>
            <person name="Gunaratne P."/>
            <person name="Havlak P."/>
            <person name="Hodgson A."/>
            <person name="Metzker M.L."/>
            <person name="Richards S."/>
            <person name="Scott G."/>
            <person name="Steffen D."/>
            <person name="Sodergren E."/>
            <person name="Wheeler D.A."/>
            <person name="Worley K.C."/>
            <person name="Ainscough R."/>
            <person name="Ambrose K.D."/>
            <person name="Ansari-Lari M.A."/>
            <person name="Aradhya S."/>
            <person name="Ashwell R.I."/>
            <person name="Babbage A.K."/>
            <person name="Bagguley C.L."/>
            <person name="Ballabio A."/>
            <person name="Banerjee R."/>
            <person name="Barker G.E."/>
            <person name="Barlow K.F."/>
            <person name="Barrett I.P."/>
            <person name="Bates K.N."/>
            <person name="Beare D.M."/>
            <person name="Beasley H."/>
            <person name="Beasley O."/>
            <person name="Beck A."/>
            <person name="Bethel G."/>
            <person name="Blechschmidt K."/>
            <person name="Brady N."/>
            <person name="Bray-Allen S."/>
            <person name="Bridgeman A.M."/>
            <person name="Brown A.J."/>
            <person name="Brown M.J."/>
            <person name="Bonnin D."/>
            <person name="Bruford E.A."/>
            <person name="Buhay C."/>
            <person name="Burch P."/>
            <person name="Burford D."/>
            <person name="Burgess J."/>
            <person name="Burrill W."/>
            <person name="Burton J."/>
            <person name="Bye J.M."/>
            <person name="Carder C."/>
            <person name="Carrel L."/>
            <person name="Chako J."/>
            <person name="Chapman J.C."/>
            <person name="Chavez D."/>
            <person name="Chen E."/>
            <person name="Chen G."/>
            <person name="Chen Y."/>
            <person name="Chen Z."/>
            <person name="Chinault C."/>
            <person name="Ciccodicola A."/>
            <person name="Clark S.Y."/>
            <person name="Clarke G."/>
            <person name="Clee C.M."/>
            <person name="Clegg S."/>
            <person name="Clerc-Blankenburg K."/>
            <person name="Clifford K."/>
            <person name="Cobley V."/>
            <person name="Cole C.G."/>
            <person name="Conquer J.S."/>
            <person name="Corby N."/>
            <person name="Connor R.E."/>
            <person name="David R."/>
            <person name="Davies J."/>
            <person name="Davis C."/>
            <person name="Davis J."/>
            <person name="Delgado O."/>
            <person name="Deshazo D."/>
            <person name="Dhami P."/>
            <person name="Ding Y."/>
            <person name="Dinh H."/>
            <person name="Dodsworth S."/>
            <person name="Draper H."/>
            <person name="Dugan-Rocha S."/>
            <person name="Dunham A."/>
            <person name="Dunn M."/>
            <person name="Durbin K.J."/>
            <person name="Dutta I."/>
            <person name="Eades T."/>
            <person name="Ellwood M."/>
            <person name="Emery-Cohen A."/>
            <person name="Errington H."/>
            <person name="Evans K.L."/>
            <person name="Faulkner L."/>
            <person name="Francis F."/>
            <person name="Frankland J."/>
            <person name="Fraser A.E."/>
            <person name="Galgoczy P."/>
            <person name="Gilbert J."/>
            <person name="Gill R."/>
            <person name="Gloeckner G."/>
            <person name="Gregory S.G."/>
            <person name="Gribble S."/>
            <person name="Griffiths C."/>
            <person name="Grocock R."/>
            <person name="Gu Y."/>
            <person name="Gwilliam R."/>
            <person name="Hamilton C."/>
            <person name="Hart E.A."/>
            <person name="Hawes A."/>
            <person name="Heath P.D."/>
            <person name="Heitmann K."/>
            <person name="Hennig S."/>
            <person name="Hernandez J."/>
            <person name="Hinzmann B."/>
            <person name="Ho S."/>
            <person name="Hoffs M."/>
            <person name="Howden P.J."/>
            <person name="Huckle E.J."/>
            <person name="Hume J."/>
            <person name="Hunt P.J."/>
            <person name="Hunt A.R."/>
            <person name="Isherwood J."/>
            <person name="Jacob L."/>
            <person name="Johnson D."/>
            <person name="Jones S."/>
            <person name="de Jong P.J."/>
            <person name="Joseph S.S."/>
            <person name="Keenan S."/>
            <person name="Kelly S."/>
            <person name="Kershaw J.K."/>
            <person name="Khan Z."/>
            <person name="Kioschis P."/>
            <person name="Klages S."/>
            <person name="Knights A.J."/>
            <person name="Kosiura A."/>
            <person name="Kovar-Smith C."/>
            <person name="Laird G.K."/>
            <person name="Langford C."/>
            <person name="Lawlor S."/>
            <person name="Leversha M."/>
            <person name="Lewis L."/>
            <person name="Liu W."/>
            <person name="Lloyd C."/>
            <person name="Lloyd D.M."/>
            <person name="Loulseged H."/>
            <person name="Loveland J.E."/>
            <person name="Lovell J.D."/>
            <person name="Lozado R."/>
            <person name="Lu J."/>
            <person name="Lyne R."/>
            <person name="Ma J."/>
            <person name="Maheshwari M."/>
            <person name="Matthews L.H."/>
            <person name="McDowall J."/>
            <person name="McLaren S."/>
            <person name="McMurray A."/>
            <person name="Meidl P."/>
            <person name="Meitinger T."/>
            <person name="Milne S."/>
            <person name="Miner G."/>
            <person name="Mistry S.L."/>
            <person name="Morgan M."/>
            <person name="Morris S."/>
            <person name="Mueller I."/>
            <person name="Mullikin J.C."/>
            <person name="Nguyen N."/>
            <person name="Nordsiek G."/>
            <person name="Nyakatura G."/>
            <person name="O'dell C.N."/>
            <person name="Okwuonu G."/>
            <person name="Palmer S."/>
            <person name="Pandian R."/>
            <person name="Parker D."/>
            <person name="Parrish J."/>
            <person name="Pasternak S."/>
            <person name="Patel D."/>
            <person name="Pearce A.V."/>
            <person name="Pearson D.M."/>
            <person name="Pelan S.E."/>
            <person name="Perez L."/>
            <person name="Porter K.M."/>
            <person name="Ramsey Y."/>
            <person name="Reichwald K."/>
            <person name="Rhodes S."/>
            <person name="Ridler K.A."/>
            <person name="Schlessinger D."/>
            <person name="Schueler M.G."/>
            <person name="Sehra H.K."/>
            <person name="Shaw-Smith C."/>
            <person name="Shen H."/>
            <person name="Sheridan E.M."/>
            <person name="Shownkeen R."/>
            <person name="Skuce C.D."/>
            <person name="Smith M.L."/>
            <person name="Sotheran E.C."/>
            <person name="Steingruber H.E."/>
            <person name="Steward C.A."/>
            <person name="Storey R."/>
            <person name="Swann R.M."/>
            <person name="Swarbreck D."/>
            <person name="Tabor P.E."/>
            <person name="Taudien S."/>
            <person name="Taylor T."/>
            <person name="Teague B."/>
            <person name="Thomas K."/>
            <person name="Thorpe A."/>
            <person name="Timms K."/>
            <person name="Tracey A."/>
            <person name="Trevanion S."/>
            <person name="Tromans A.C."/>
            <person name="d'Urso M."/>
            <person name="Verduzco D."/>
            <person name="Villasana D."/>
            <person name="Waldron L."/>
            <person name="Wall M."/>
            <person name="Wang Q."/>
            <person name="Warren J."/>
            <person name="Warry G.L."/>
            <person name="Wei X."/>
            <person name="West A."/>
            <person name="Whitehead S.L."/>
            <person name="Whiteley M.N."/>
            <person name="Wilkinson J.E."/>
            <person name="Willey D.L."/>
            <person name="Williams G."/>
            <person name="Williams L."/>
            <person name="Williamson A."/>
            <person name="Williamson H."/>
            <person name="Wilming L."/>
            <person name="Woodmansey R.L."/>
            <person name="Wray P.W."/>
            <person name="Yen J."/>
            <person name="Zhang J."/>
            <person name="Zhou J."/>
            <person name="Zoghbi H."/>
            <person name="Zorilla S."/>
            <person name="Buck D."/>
            <person name="Reinhardt R."/>
            <person name="Poustka A."/>
            <person name="Rosenthal A."/>
            <person name="Lehrach H."/>
            <person name="Meindl A."/>
            <person name="Minx P.J."/>
            <person name="Hillier L.W."/>
            <person name="Willard H.F."/>
            <person name="Wilson R.K."/>
            <person name="Waterston R.H."/>
            <person name="Rice C.M."/>
            <person name="Vaudin M."/>
            <person name="Coulson A."/>
            <person name="Nelson D.L."/>
            <person name="Weinstock G."/>
            <person name="Sulston J.E."/>
            <person name="Durbin R.M."/>
            <person name="Hubbard T."/>
            <person name="Gibbs R.A."/>
            <person name="Beck S."/>
            <person name="Rogers J."/>
            <person name="Bentley D.R."/>
        </authorList>
    </citation>
    <scope>NUCLEOTIDE SEQUENCE [LARGE SCALE GENOMIC DNA]</scope>
</reference>
<reference key="5">
    <citation type="submission" date="2005-07" db="EMBL/GenBank/DDBJ databases">
        <authorList>
            <person name="Mural R.J."/>
            <person name="Istrail S."/>
            <person name="Sutton G.G."/>
            <person name="Florea L."/>
            <person name="Halpern A.L."/>
            <person name="Mobarry C.M."/>
            <person name="Lippert R."/>
            <person name="Walenz B."/>
            <person name="Shatkay H."/>
            <person name="Dew I."/>
            <person name="Miller J.R."/>
            <person name="Flanigan M.J."/>
            <person name="Edwards N.J."/>
            <person name="Bolanos R."/>
            <person name="Fasulo D."/>
            <person name="Halldorsson B.V."/>
            <person name="Hannenhalli S."/>
            <person name="Turner R."/>
            <person name="Yooseph S."/>
            <person name="Lu F."/>
            <person name="Nusskern D.R."/>
            <person name="Shue B.C."/>
            <person name="Zheng X.H."/>
            <person name="Zhong F."/>
            <person name="Delcher A.L."/>
            <person name="Huson D.H."/>
            <person name="Kravitz S.A."/>
            <person name="Mouchard L."/>
            <person name="Reinert K."/>
            <person name="Remington K.A."/>
            <person name="Clark A.G."/>
            <person name="Waterman M.S."/>
            <person name="Eichler E.E."/>
            <person name="Adams M.D."/>
            <person name="Hunkapiller M.W."/>
            <person name="Myers E.W."/>
            <person name="Venter J.C."/>
        </authorList>
    </citation>
    <scope>NUCLEOTIDE SEQUENCE [LARGE SCALE GENOMIC DNA]</scope>
</reference>
<reference key="6">
    <citation type="journal article" date="2004" name="Genome Res.">
        <title>The status, quality, and expansion of the NIH full-length cDNA project: the Mammalian Gene Collection (MGC).</title>
        <authorList>
            <consortium name="The MGC Project Team"/>
        </authorList>
    </citation>
    <scope>NUCLEOTIDE SEQUENCE [LARGE SCALE MRNA] (ISOFORMS 1 AND 4)</scope>
    <source>
        <tissue>Brain</tissue>
        <tissue>Lung</tissue>
        <tissue>Muscle</tissue>
        <tissue>Placenta</tissue>
    </source>
</reference>
<reference key="7">
    <citation type="journal article" date="1996" name="Genomics">
        <title>A novel gene, DXS8237E, lies within 20 kb upstream of UBE1 in Xp11.23 and has a different X inactivation status.</title>
        <authorList>
            <person name="Coleman M.P."/>
            <person name="Ambrose H.J."/>
            <person name="Carrel L."/>
            <person name="Nemeth A.H."/>
            <person name="Willard H.F."/>
            <person name="Davies K.E."/>
        </authorList>
    </citation>
    <scope>NUCLEOTIDE SEQUENCE [MRNA] OF 544-930</scope>
    <source>
        <tissue>Fetal brain</tissue>
    </source>
</reference>
<reference key="8">
    <citation type="journal article" date="2002" name="Genome Res.">
        <title>Large-scale proteomic analysis of the human spliceosome.</title>
        <authorList>
            <person name="Rappsilber J."/>
            <person name="Ryder U."/>
            <person name="Lamond A.I."/>
            <person name="Mann M."/>
        </authorList>
    </citation>
    <scope>ASSOCIATION WITH THE SPLICEOSOME</scope>
    <scope>IDENTIFICATION BY MASS SPECTROMETRY</scope>
</reference>
<reference key="9">
    <citation type="journal article" date="2006" name="Cell">
        <title>Global, in vivo, and site-specific phosphorylation dynamics in signaling networks.</title>
        <authorList>
            <person name="Olsen J.V."/>
            <person name="Blagoev B."/>
            <person name="Gnad F."/>
            <person name="Macek B."/>
            <person name="Kumar C."/>
            <person name="Mortensen P."/>
            <person name="Mann M."/>
        </authorList>
    </citation>
    <scope>PHOSPHORYLATION [LARGE SCALE ANALYSIS] AT SER-797</scope>
    <scope>IDENTIFICATION BY MASS SPECTROMETRY [LARGE SCALE ANALYSIS]</scope>
    <source>
        <tissue>Cervix carcinoma</tissue>
    </source>
</reference>
<reference key="10">
    <citation type="journal article" date="2007" name="Science">
        <title>ATM and ATR substrate analysis reveals extensive protein networks responsive to DNA damage.</title>
        <authorList>
            <person name="Matsuoka S."/>
            <person name="Ballif B.A."/>
            <person name="Smogorzewska A."/>
            <person name="McDonald E.R. III"/>
            <person name="Hurov K.E."/>
            <person name="Luo J."/>
            <person name="Bakalarski C.E."/>
            <person name="Zhao Z."/>
            <person name="Solimini N."/>
            <person name="Lerenthal Y."/>
            <person name="Shiloh Y."/>
            <person name="Gygi S.P."/>
            <person name="Elledge S.J."/>
        </authorList>
    </citation>
    <scope>IDENTIFICATION BY MASS SPECTROMETRY [LARGE SCALE ANALYSIS]</scope>
    <source>
        <tissue>Embryonic kidney</tissue>
    </source>
</reference>
<reference key="11">
    <citation type="journal article" date="2008" name="Mol. Cell">
        <title>Kinase-selective enrichment enables quantitative phosphoproteomics of the kinome across the cell cycle.</title>
        <authorList>
            <person name="Daub H."/>
            <person name="Olsen J.V."/>
            <person name="Bairlein M."/>
            <person name="Gnad F."/>
            <person name="Oppermann F.S."/>
            <person name="Korner R."/>
            <person name="Greff Z."/>
            <person name="Keri G."/>
            <person name="Stemmann O."/>
            <person name="Mann M."/>
        </authorList>
    </citation>
    <scope>PHOSPHORYLATION [LARGE SCALE ANALYSIS] AT SER-723</scope>
    <scope>IDENTIFICATION BY MASS SPECTROMETRY [LARGE SCALE ANALYSIS]</scope>
    <source>
        <tissue>Cervix carcinoma</tissue>
    </source>
</reference>
<reference key="12">
    <citation type="journal article" date="2008" name="Proc. Natl. Acad. Sci. U.S.A.">
        <title>A quantitative atlas of mitotic phosphorylation.</title>
        <authorList>
            <person name="Dephoure N."/>
            <person name="Zhou C."/>
            <person name="Villen J."/>
            <person name="Beausoleil S.A."/>
            <person name="Bakalarski C.E."/>
            <person name="Elledge S.J."/>
            <person name="Gygi S.P."/>
        </authorList>
    </citation>
    <scope>PHOSPHORYLATION [LARGE SCALE ANALYSIS] AT SER-61; SER-723; SER-733; SER-736 AND SER-738</scope>
    <scope>PHOSPHORYLATION [LARGE SCALE ANALYSIS] AT SER-30 (ISOFORM 5)</scope>
    <scope>IDENTIFICATION BY MASS SPECTROMETRY [LARGE SCALE ANALYSIS]</scope>
    <source>
        <tissue>Cervix carcinoma</tissue>
    </source>
</reference>
<reference key="13">
    <citation type="journal article" date="2009" name="Anal. Chem.">
        <title>Lys-N and trypsin cover complementary parts of the phosphoproteome in a refined SCX-based approach.</title>
        <authorList>
            <person name="Gauci S."/>
            <person name="Helbig A.O."/>
            <person name="Slijper M."/>
            <person name="Krijgsveld J."/>
            <person name="Heck A.J."/>
            <person name="Mohammed S."/>
        </authorList>
    </citation>
    <scope>IDENTIFICATION BY MASS SPECTROMETRY [LARGE SCALE ANALYSIS]</scope>
</reference>
<reference key="14">
    <citation type="journal article" date="2009" name="Sci. Signal.">
        <title>Quantitative phosphoproteomic analysis of T cell receptor signaling reveals system-wide modulation of protein-protein interactions.</title>
        <authorList>
            <person name="Mayya V."/>
            <person name="Lundgren D.H."/>
            <person name="Hwang S.-I."/>
            <person name="Rezaul K."/>
            <person name="Wu L."/>
            <person name="Eng J.K."/>
            <person name="Rodionov V."/>
            <person name="Han D.K."/>
        </authorList>
    </citation>
    <scope>PHOSPHORYLATION [LARGE SCALE ANALYSIS] AT SER-733; SER-736; SER-738 AND SER-797</scope>
    <scope>IDENTIFICATION BY MASS SPECTROMETRY [LARGE SCALE ANALYSIS]</scope>
    <source>
        <tissue>Leukemic T-cell</tissue>
    </source>
</reference>
<reference key="15">
    <citation type="journal article" date="2009" name="Science">
        <title>Lysine acetylation targets protein complexes and co-regulates major cellular functions.</title>
        <authorList>
            <person name="Choudhary C."/>
            <person name="Kumar C."/>
            <person name="Gnad F."/>
            <person name="Nielsen M.L."/>
            <person name="Rehman M."/>
            <person name="Walther T.C."/>
            <person name="Olsen J.V."/>
            <person name="Mann M."/>
        </authorList>
    </citation>
    <scope>ACETYLATION [LARGE SCALE ANALYSIS] AT LYS-383</scope>
    <scope>IDENTIFICATION BY MASS SPECTROMETRY [LARGE SCALE ANALYSIS]</scope>
</reference>
<reference key="16">
    <citation type="journal article" date="2010" name="Am. J. Hum. Genet.">
        <title>Massively parallel sequencing of exons on the X chromosome identifies RBM10 as the gene that causes a syndromic form of cleft palate.</title>
        <authorList>
            <person name="Johnston J.J."/>
            <person name="Teer J.K."/>
            <person name="Cherukuri P.F."/>
            <person name="Hansen N.F."/>
            <person name="Loftus S.K."/>
            <person name="Chong K."/>
            <person name="Mullikin J.C."/>
            <person name="Biesecker L.G."/>
        </authorList>
    </citation>
    <scope>INVOLVEMENT IN TARPS</scope>
</reference>
<reference key="17">
    <citation type="journal article" date="2010" name="Sci. Signal.">
        <title>Quantitative phosphoproteomics reveals widespread full phosphorylation site occupancy during mitosis.</title>
        <authorList>
            <person name="Olsen J.V."/>
            <person name="Vermeulen M."/>
            <person name="Santamaria A."/>
            <person name="Kumar C."/>
            <person name="Miller M.L."/>
            <person name="Jensen L.J."/>
            <person name="Gnad F."/>
            <person name="Cox J."/>
            <person name="Jensen T.S."/>
            <person name="Nigg E.A."/>
            <person name="Brunak S."/>
            <person name="Mann M."/>
        </authorList>
    </citation>
    <scope>ACETYLATION [LARGE SCALE ANALYSIS] AT SER-2 (ISOFORM 5)</scope>
    <scope>PHOSPHORYLATION [LARGE SCALE ANALYSIS] AT SER-89; SER-718; SER-723; SER-738; SER-781 AND SER-797</scope>
    <scope>PHOSPHORYLATION [LARGE SCALE ANALYSIS] AT SER-30 (ISOFORM 5)</scope>
    <scope>CLEAVAGE OF INITIATOR METHIONINE [LARGE SCALE ANALYSIS] (ISOFORM 5)</scope>
    <scope>IDENTIFICATION BY MASS SPECTROMETRY [LARGE SCALE ANALYSIS]</scope>
    <source>
        <tissue>Cervix carcinoma</tissue>
    </source>
</reference>
<reference key="18">
    <citation type="journal article" date="2011" name="BMC Syst. Biol.">
        <title>Initial characterization of the human central proteome.</title>
        <authorList>
            <person name="Burkard T.R."/>
            <person name="Planyavsky M."/>
            <person name="Kaupe I."/>
            <person name="Breitwieser F.P."/>
            <person name="Buerckstuemmer T."/>
            <person name="Bennett K.L."/>
            <person name="Superti-Furga G."/>
            <person name="Colinge J."/>
        </authorList>
    </citation>
    <scope>IDENTIFICATION BY MASS SPECTROMETRY [LARGE SCALE ANALYSIS]</scope>
</reference>
<reference key="19">
    <citation type="journal article" date="2011" name="Sci. Signal.">
        <title>System-wide temporal characterization of the proteome and phosphoproteome of human embryonic stem cell differentiation.</title>
        <authorList>
            <person name="Rigbolt K.T."/>
            <person name="Prokhorova T.A."/>
            <person name="Akimov V."/>
            <person name="Henningsen J."/>
            <person name="Johansen P.T."/>
            <person name="Kratchmarova I."/>
            <person name="Kassem M."/>
            <person name="Mann M."/>
            <person name="Olsen J.V."/>
            <person name="Blagoev B."/>
        </authorList>
    </citation>
    <scope>ACETYLATION [LARGE SCALE ANALYSIS] AT SER-2 (ISOFORM 5)</scope>
    <scope>PHOSPHORYLATION [LARGE SCALE ANALYSIS] AT SER-718; SER-723; SER-736 AND SER-797</scope>
    <scope>PHOSPHORYLATION [LARGE SCALE ANALYSIS] AT SER-30 (ISOFORM 5)</scope>
    <scope>CLEAVAGE OF INITIATOR METHIONINE [LARGE SCALE ANALYSIS] (ISOFORM 5)</scope>
    <scope>IDENTIFICATION BY MASS SPECTROMETRY [LARGE SCALE ANALYSIS]</scope>
</reference>
<reference key="20">
    <citation type="journal article" date="2013" name="J. Proteome Res.">
        <title>Toward a comprehensive characterization of a human cancer cell phosphoproteome.</title>
        <authorList>
            <person name="Zhou H."/>
            <person name="Di Palma S."/>
            <person name="Preisinger C."/>
            <person name="Peng M."/>
            <person name="Polat A.N."/>
            <person name="Heck A.J."/>
            <person name="Mohammed S."/>
        </authorList>
    </citation>
    <scope>PHOSPHORYLATION [LARGE SCALE ANALYSIS] AT SER-89; SER-723; SER-736; SER-797 AND SER-845</scope>
    <scope>IDENTIFICATION BY MASS SPECTROMETRY [LARGE SCALE ANALYSIS]</scope>
    <source>
        <tissue>Cervix carcinoma</tissue>
        <tissue>Erythroleukemia</tissue>
    </source>
</reference>
<reference key="21">
    <citation type="journal article" date="2014" name="J. Proteomics">
        <title>An enzyme assisted RP-RPLC approach for in-depth analysis of human liver phosphoproteome.</title>
        <authorList>
            <person name="Bian Y."/>
            <person name="Song C."/>
            <person name="Cheng K."/>
            <person name="Dong M."/>
            <person name="Wang F."/>
            <person name="Huang J."/>
            <person name="Sun D."/>
            <person name="Wang L."/>
            <person name="Ye M."/>
            <person name="Zou H."/>
        </authorList>
    </citation>
    <scope>PHOSPHORYLATION [LARGE SCALE ANALYSIS] AT SER-89; SER-718; SER-723; SER-736 AND SER-738</scope>
    <scope>IDENTIFICATION BY MASS SPECTROMETRY [LARGE SCALE ANALYSIS]</scope>
    <source>
        <tissue>Liver</tissue>
    </source>
</reference>
<reference key="22">
    <citation type="journal article" date="2014" name="Mol. Cell. Proteomics">
        <title>Immunoaffinity enrichment and mass spectrometry analysis of protein methylation.</title>
        <authorList>
            <person name="Guo A."/>
            <person name="Gu H."/>
            <person name="Zhou J."/>
            <person name="Mulhern D."/>
            <person name="Wang Y."/>
            <person name="Lee K.A."/>
            <person name="Yang V."/>
            <person name="Aguiar M."/>
            <person name="Kornhauser J."/>
            <person name="Jia X."/>
            <person name="Ren J."/>
            <person name="Beausoleil S.A."/>
            <person name="Silva J.C."/>
            <person name="Vemulapalli V."/>
            <person name="Bedford M.T."/>
            <person name="Comb M.J."/>
        </authorList>
    </citation>
    <scope>METHYLATION [LARGE SCALE ANALYSIS] AT ARG-902</scope>
    <scope>IDENTIFICATION BY MASS SPECTROMETRY [LARGE SCALE ANALYSIS]</scope>
    <source>
        <tissue>Colon carcinoma</tissue>
    </source>
</reference>
<reference key="23">
    <citation type="journal article" date="2007" name="Mol. Cell">
        <title>A histone H2A deubiquitinase complex coordinating histone acetylation and H1 dissociation in transcriptional regulation.</title>
        <authorList>
            <person name="Zhu P."/>
            <person name="Zhou W."/>
            <person name="Wang J."/>
            <person name="Puc J."/>
            <person name="Ohgi K.A."/>
            <person name="Erdjument-Bromage H."/>
            <person name="Tempst P."/>
            <person name="Glass C.K."/>
            <person name="Rosenfeld M.G."/>
        </authorList>
    </citation>
    <scope>IDENTIFICATION IN A LARGE CHROMATIN REMODELING COMPLEX</scope>
</reference>
<reference key="24">
    <citation type="journal article" date="2008" name="Biol. Cell">
        <title>S1-1 nuclear domains: characterization and dynamics as a function of transcriptional activity.</title>
        <authorList>
            <person name="Inoue A."/>
            <person name="Tsugawa K."/>
            <person name="Tokunaga K."/>
            <person name="Takahashi K.P."/>
            <person name="Uni S."/>
            <person name="Kimura M."/>
            <person name="Nishio K."/>
            <person name="Yamamoto N."/>
            <person name="Honda K."/>
            <person name="Watanabe T."/>
            <person name="Yamane H."/>
            <person name="Tani T."/>
        </authorList>
    </citation>
    <scope>FUNCTION</scope>
    <scope>SUBCELLULAR LOCATION</scope>
</reference>
<reference key="25">
    <citation type="journal article" date="2011" name="J. Mol. Biol.">
        <title>Characterization of a family of RanBP2-type zinc fingers that can recognize single-stranded RNA.</title>
        <authorList>
            <person name="Nguyen C.D."/>
            <person name="Mansfield R.E."/>
            <person name="Leung W."/>
            <person name="Vaz P.M."/>
            <person name="Loughlin F.E."/>
            <person name="Grant R.P."/>
            <person name="Mackay J.P."/>
        </authorList>
    </citation>
    <scope>FUNCTION</scope>
</reference>
<reference key="26">
    <citation type="journal article" date="2017" name="Mol. Cell">
        <title>A Compendium of RNA-Binding Proteins that Regulate MicroRNA Biogenesis.</title>
        <authorList>
            <person name="Treiber T."/>
            <person name="Treiber N."/>
            <person name="Plessmann U."/>
            <person name="Harlander S."/>
            <person name="Daiss J.L."/>
            <person name="Eichner N."/>
            <person name="Lehmann G."/>
            <person name="Schall K."/>
            <person name="Urlaub H."/>
            <person name="Meister G."/>
        </authorList>
    </citation>
    <scope>FUNCTION</scope>
    <scope>MIRNA-BINDING</scope>
</reference>
<reference key="27">
    <citation type="journal article" date="2006" name="Science">
        <title>The consensus coding sequences of human breast and colorectal cancers.</title>
        <authorList>
            <person name="Sjoeblom T."/>
            <person name="Jones S."/>
            <person name="Wood L.D."/>
            <person name="Parsons D.W."/>
            <person name="Lin J."/>
            <person name="Barber T.D."/>
            <person name="Mandelker D."/>
            <person name="Leary R.J."/>
            <person name="Ptak J."/>
            <person name="Silliman N."/>
            <person name="Szabo S."/>
            <person name="Buckhaults P."/>
            <person name="Farrell C."/>
            <person name="Meeh P."/>
            <person name="Markowitz S.D."/>
            <person name="Willis J."/>
            <person name="Dawson D."/>
            <person name="Willson J.K.V."/>
            <person name="Gazdar A.F."/>
            <person name="Hartigan J."/>
            <person name="Wu L."/>
            <person name="Liu C."/>
            <person name="Parmigiani G."/>
            <person name="Park B.H."/>
            <person name="Bachman K.E."/>
            <person name="Papadopoulos N."/>
            <person name="Vogelstein B."/>
            <person name="Kinzler K.W."/>
            <person name="Velculescu V.E."/>
        </authorList>
    </citation>
    <scope>VARIANT [LARGE SCALE ANALYSIS] HIS-396</scope>
</reference>
<accession>P98175</accession>
<accession>A0A0A0MR66</accession>
<accession>C4AM81</accession>
<accession>Q14136</accession>
<accession>Q5JRR2</accession>
<accession>Q9BTE4</accession>
<accession>Q9BTX0</accession>
<accession>Q9NTB1</accession>
<feature type="chain" id="PRO_0000081767" description="RNA-binding protein 10">
    <location>
        <begin position="1"/>
        <end position="930"/>
    </location>
</feature>
<feature type="domain" description="RRM 1" evidence="4">
    <location>
        <begin position="129"/>
        <end position="209"/>
    </location>
</feature>
<feature type="domain" description="RRM 2" evidence="4">
    <location>
        <begin position="300"/>
        <end position="384"/>
    </location>
</feature>
<feature type="domain" description="G-patch" evidence="3">
    <location>
        <begin position="858"/>
        <end position="904"/>
    </location>
</feature>
<feature type="zinc finger region" description="RanBP2-type" evidence="5">
    <location>
        <begin position="212"/>
        <end position="242"/>
    </location>
</feature>
<feature type="zinc finger region" description="C2H2-type; atypical" evidence="2">
    <location>
        <begin position="759"/>
        <end position="784"/>
    </location>
</feature>
<feature type="region of interest" description="Disordered" evidence="6">
    <location>
        <begin position="1"/>
        <end position="127"/>
    </location>
</feature>
<feature type="region of interest" description="Disordered" evidence="6">
    <location>
        <begin position="466"/>
        <end position="524"/>
    </location>
</feature>
<feature type="region of interest" description="Disordered" evidence="6">
    <location>
        <begin position="537"/>
        <end position="569"/>
    </location>
</feature>
<feature type="region of interest" description="Disordered" evidence="6">
    <location>
        <begin position="620"/>
        <end position="685"/>
    </location>
</feature>
<feature type="region of interest" description="Disordered" evidence="6">
    <location>
        <begin position="700"/>
        <end position="753"/>
    </location>
</feature>
<feature type="region of interest" description="Disordered" evidence="6">
    <location>
        <begin position="815"/>
        <end position="861"/>
    </location>
</feature>
<feature type="compositionally biased region" description="Basic and acidic residues" evidence="6">
    <location>
        <begin position="1"/>
        <end position="14"/>
    </location>
</feature>
<feature type="compositionally biased region" description="Basic and acidic residues" evidence="6">
    <location>
        <begin position="21"/>
        <end position="45"/>
    </location>
</feature>
<feature type="compositionally biased region" description="Acidic residues" evidence="6">
    <location>
        <begin position="59"/>
        <end position="70"/>
    </location>
</feature>
<feature type="compositionally biased region" description="Basic residues" evidence="6">
    <location>
        <begin position="80"/>
        <end position="89"/>
    </location>
</feature>
<feature type="compositionally biased region" description="Basic and acidic residues" evidence="6">
    <location>
        <begin position="98"/>
        <end position="111"/>
    </location>
</feature>
<feature type="compositionally biased region" description="Acidic residues" evidence="6">
    <location>
        <begin position="112"/>
        <end position="125"/>
    </location>
</feature>
<feature type="compositionally biased region" description="Polar residues" evidence="6">
    <location>
        <begin position="508"/>
        <end position="524"/>
    </location>
</feature>
<feature type="compositionally biased region" description="Low complexity" evidence="6">
    <location>
        <begin position="541"/>
        <end position="557"/>
    </location>
</feature>
<feature type="compositionally biased region" description="Basic and acidic residues" evidence="6">
    <location>
        <begin position="623"/>
        <end position="639"/>
    </location>
</feature>
<feature type="compositionally biased region" description="Basic and acidic residues" evidence="6">
    <location>
        <begin position="653"/>
        <end position="669"/>
    </location>
</feature>
<feature type="compositionally biased region" description="Basic and acidic residues" evidence="6">
    <location>
        <begin position="700"/>
        <end position="709"/>
    </location>
</feature>
<feature type="compositionally biased region" description="Basic and acidic residues" evidence="6">
    <location>
        <begin position="743"/>
        <end position="753"/>
    </location>
</feature>
<feature type="compositionally biased region" description="Basic and acidic residues" evidence="6">
    <location>
        <begin position="815"/>
        <end position="826"/>
    </location>
</feature>
<feature type="modified residue" description="Phosphoserine" evidence="19">
    <location>
        <position position="61"/>
    </location>
</feature>
<feature type="modified residue" description="Phosphoserine" evidence="23 25 27">
    <location>
        <position position="89"/>
    </location>
</feature>
<feature type="modified residue" description="N6-acetyllysine" evidence="21">
    <location>
        <position position="383"/>
    </location>
</feature>
<feature type="modified residue" description="Phosphoserine" evidence="23 24 27">
    <location>
        <position position="718"/>
    </location>
</feature>
<feature type="modified residue" description="Phosphoserine" evidence="19 20 23 24 25 27">
    <location>
        <position position="723"/>
    </location>
</feature>
<feature type="modified residue" description="Phosphoserine" evidence="19 22">
    <location>
        <position position="733"/>
    </location>
</feature>
<feature type="modified residue" description="Phosphoserine" evidence="19 22 24 25 27">
    <location>
        <position position="736"/>
    </location>
</feature>
<feature type="modified residue" description="Phosphoserine" evidence="19 22 23 27">
    <location>
        <position position="738"/>
    </location>
</feature>
<feature type="modified residue" description="Phosphoserine" evidence="23">
    <location>
        <position position="781"/>
    </location>
</feature>
<feature type="modified residue" description="Phosphoserine" evidence="18 22 23 24 25">
    <location>
        <position position="797"/>
    </location>
</feature>
<feature type="modified residue" description="Phosphoserine" evidence="25">
    <location>
        <position position="845"/>
    </location>
</feature>
<feature type="modified residue" description="Omega-N-methylarginine" evidence="26">
    <location>
        <position position="902"/>
    </location>
</feature>
<feature type="splice variant" id="VSP_059341" description="In isoform 5.">
    <original>M</original>
    <variation>MSGSPSLTARAEKVSVDAGRGGGESLQEASPRLADHGSSSGGGWEVKRSQRLRRGPSSPRRPYQDM</variation>
    <location>
        <position position="1"/>
    </location>
</feature>
<feature type="splice variant" id="VSP_036173" description="In isoform 3 and isoform 4." evidence="13 14">
    <location>
        <begin position="68"/>
        <end position="144"/>
    </location>
</feature>
<feature type="splice variant" id="VSP_036035" description="In isoform 2 and isoform 4." evidence="14 15">
    <location>
        <position position="354"/>
    </location>
</feature>
<feature type="sequence variant" id="VAR_035486" description="In a colorectal cancer sample; somatic mutation; dbSNP:rs2147179903." evidence="7">
    <original>R</original>
    <variation>H</variation>
    <location>
        <position position="396"/>
    </location>
</feature>
<feature type="sequence conflict" description="In Ref. 1; BAA09471." evidence="16" ref="1">
    <original>A</original>
    <variation>P</variation>
    <location>
        <position position="499"/>
    </location>
</feature>
<feature type="sequence conflict" description="In Ref. 3; CAB70731." evidence="16" ref="3">
    <original>S</original>
    <variation>T</variation>
    <location>
        <position position="672"/>
    </location>
</feature>
<feature type="strand" evidence="28">
    <location>
        <begin position="130"/>
        <end position="134"/>
    </location>
</feature>
<feature type="helix" evidence="28">
    <location>
        <begin position="142"/>
        <end position="152"/>
    </location>
</feature>
<feature type="strand" evidence="28">
    <location>
        <begin position="161"/>
        <end position="163"/>
    </location>
</feature>
<feature type="strand" evidence="28">
    <location>
        <begin position="165"/>
        <end position="167"/>
    </location>
</feature>
<feature type="strand" evidence="28">
    <location>
        <begin position="171"/>
        <end position="177"/>
    </location>
</feature>
<feature type="helix" evidence="28">
    <location>
        <begin position="181"/>
        <end position="189"/>
    </location>
</feature>
<feature type="turn" evidence="28">
    <location>
        <begin position="190"/>
        <end position="193"/>
    </location>
</feature>
<feature type="strand" evidence="28">
    <location>
        <begin position="194"/>
        <end position="197"/>
    </location>
</feature>
<feature type="strand" evidence="28">
    <location>
        <begin position="200"/>
        <end position="205"/>
    </location>
</feature>
<feature type="strand" evidence="30">
    <location>
        <begin position="220"/>
        <end position="222"/>
    </location>
</feature>
<feature type="strand" evidence="30">
    <location>
        <begin position="234"/>
        <end position="236"/>
    </location>
</feature>
<feature type="strand" evidence="29">
    <location>
        <begin position="301"/>
        <end position="304"/>
    </location>
</feature>
<feature type="helix" evidence="29">
    <location>
        <begin position="314"/>
        <end position="320"/>
    </location>
</feature>
<feature type="helix" evidence="29">
    <location>
        <begin position="321"/>
        <end position="323"/>
    </location>
</feature>
<feature type="turn" evidence="29">
    <location>
        <begin position="328"/>
        <end position="330"/>
    </location>
</feature>
<feature type="strand" evidence="29">
    <location>
        <begin position="337"/>
        <end position="342"/>
    </location>
</feature>
<feature type="strand" evidence="29">
    <location>
        <begin position="346"/>
        <end position="349"/>
    </location>
</feature>
<feature type="helix" evidence="29">
    <location>
        <begin position="355"/>
        <end position="363"/>
    </location>
</feature>
<feature type="strand" evidence="32">
    <location>
        <begin position="366"/>
        <end position="368"/>
    </location>
</feature>
<feature type="helix" evidence="29">
    <location>
        <begin position="372"/>
        <end position="374"/>
    </location>
</feature>
<feature type="strand" evidence="32">
    <location>
        <begin position="378"/>
        <end position="381"/>
    </location>
</feature>
<feature type="helix" evidence="31">
    <location>
        <begin position="569"/>
        <end position="571"/>
    </location>
</feature>
<feature type="strand" evidence="31">
    <location>
        <begin position="572"/>
        <end position="574"/>
    </location>
</feature>
<feature type="turn" evidence="31">
    <location>
        <begin position="576"/>
        <end position="578"/>
    </location>
</feature>
<feature type="turn" evidence="31">
    <location>
        <begin position="584"/>
        <end position="586"/>
    </location>
</feature>
<feature type="strand" evidence="31">
    <location>
        <begin position="597"/>
        <end position="599"/>
    </location>
</feature>
<feature type="turn" evidence="31">
    <location>
        <begin position="600"/>
        <end position="603"/>
    </location>
</feature>
<feature type="strand" evidence="31">
    <location>
        <begin position="604"/>
        <end position="608"/>
    </location>
</feature>
<feature type="turn" evidence="31">
    <location>
        <begin position="610"/>
        <end position="612"/>
    </location>
</feature>
<feature type="strand" evidence="31">
    <location>
        <begin position="614"/>
        <end position="617"/>
    </location>
</feature>
<feature type="strand" evidence="31">
    <location>
        <begin position="622"/>
        <end position="624"/>
    </location>
</feature>
<feature type="strand" evidence="31">
    <location>
        <begin position="627"/>
        <end position="630"/>
    </location>
</feature>
<feature type="initiator methionine" description="Removed" evidence="23 24">
    <location sequence="P98175-5">
        <position position="1"/>
    </location>
</feature>
<feature type="modified residue" description="N-acetylserine" evidence="23 24">
    <location sequence="P98175-5">
        <position position="2"/>
    </location>
</feature>
<feature type="modified residue" description="Phosphoserine" evidence="19 23 24">
    <location sequence="P98175-5">
        <position position="30"/>
    </location>
</feature>
<evidence type="ECO:0000250" key="1">
    <source>
        <dbReference type="UniProtKB" id="P70501"/>
    </source>
</evidence>
<evidence type="ECO:0000255" key="2">
    <source>
        <dbReference type="PROSITE-ProRule" id="PRU00042"/>
    </source>
</evidence>
<evidence type="ECO:0000255" key="3">
    <source>
        <dbReference type="PROSITE-ProRule" id="PRU00092"/>
    </source>
</evidence>
<evidence type="ECO:0000255" key="4">
    <source>
        <dbReference type="PROSITE-ProRule" id="PRU00176"/>
    </source>
</evidence>
<evidence type="ECO:0000255" key="5">
    <source>
        <dbReference type="PROSITE-ProRule" id="PRU00322"/>
    </source>
</evidence>
<evidence type="ECO:0000256" key="6">
    <source>
        <dbReference type="SAM" id="MobiDB-lite"/>
    </source>
</evidence>
<evidence type="ECO:0000269" key="7">
    <source>
    </source>
</evidence>
<evidence type="ECO:0000269" key="8">
    <source>
    </source>
</evidence>
<evidence type="ECO:0000269" key="9">
    <source>
    </source>
</evidence>
<evidence type="ECO:0000269" key="10">
    <source>
    </source>
</evidence>
<evidence type="ECO:0000269" key="11">
    <source>
    </source>
</evidence>
<evidence type="ECO:0000269" key="12">
    <source>
    </source>
</evidence>
<evidence type="ECO:0000303" key="13">
    <source>
    </source>
</evidence>
<evidence type="ECO:0000303" key="14">
    <source>
    </source>
</evidence>
<evidence type="ECO:0000303" key="15">
    <source>
    </source>
</evidence>
<evidence type="ECO:0000305" key="16"/>
<evidence type="ECO:0000312" key="17">
    <source>
        <dbReference type="HGNC" id="HGNC:9896"/>
    </source>
</evidence>
<evidence type="ECO:0007744" key="18">
    <source>
    </source>
</evidence>
<evidence type="ECO:0007744" key="19">
    <source>
    </source>
</evidence>
<evidence type="ECO:0007744" key="20">
    <source>
    </source>
</evidence>
<evidence type="ECO:0007744" key="21">
    <source>
    </source>
</evidence>
<evidence type="ECO:0007744" key="22">
    <source>
    </source>
</evidence>
<evidence type="ECO:0007744" key="23">
    <source>
    </source>
</evidence>
<evidence type="ECO:0007744" key="24">
    <source>
    </source>
</evidence>
<evidence type="ECO:0007744" key="25">
    <source>
    </source>
</evidence>
<evidence type="ECO:0007744" key="26">
    <source>
    </source>
</evidence>
<evidence type="ECO:0007744" key="27">
    <source>
    </source>
</evidence>
<evidence type="ECO:0007829" key="28">
    <source>
        <dbReference type="PDB" id="2LXI"/>
    </source>
</evidence>
<evidence type="ECO:0007829" key="29">
    <source>
        <dbReference type="PDB" id="2M2B"/>
    </source>
</evidence>
<evidence type="ECO:0007829" key="30">
    <source>
        <dbReference type="PDB" id="2MXV"/>
    </source>
</evidence>
<evidence type="ECO:0007829" key="31">
    <source>
        <dbReference type="PDB" id="2MXW"/>
    </source>
</evidence>
<evidence type="ECO:0007829" key="32">
    <source>
        <dbReference type="PDB" id="5ZSW"/>
    </source>
</evidence>
<dbReference type="EMBL" id="D50912">
    <property type="protein sequence ID" value="BAA09471.1"/>
    <property type="status" value="ALT_INIT"/>
    <property type="molecule type" value="mRNA"/>
</dbReference>
<dbReference type="EMBL" id="AK292758">
    <property type="protein sequence ID" value="BAF85447.1"/>
    <property type="molecule type" value="mRNA"/>
</dbReference>
<dbReference type="EMBL" id="AL137421">
    <property type="protein sequence ID" value="CAB70731.1"/>
    <property type="status" value="ALT_SEQ"/>
    <property type="molecule type" value="mRNA"/>
</dbReference>
<dbReference type="EMBL" id="AL513366">
    <property type="status" value="NOT_ANNOTATED_CDS"/>
    <property type="molecule type" value="Genomic_DNA"/>
</dbReference>
<dbReference type="EMBL" id="CH471164">
    <property type="protein sequence ID" value="EAW59284.1"/>
    <property type="molecule type" value="Genomic_DNA"/>
</dbReference>
<dbReference type="EMBL" id="CH471164">
    <property type="protein sequence ID" value="EAW59285.1"/>
    <property type="molecule type" value="Genomic_DNA"/>
</dbReference>
<dbReference type="EMBL" id="CH471164">
    <property type="protein sequence ID" value="EAW59286.1"/>
    <property type="molecule type" value="Genomic_DNA"/>
</dbReference>
<dbReference type="EMBL" id="CH471164">
    <property type="protein sequence ID" value="EAW59287.1"/>
    <property type="molecule type" value="Genomic_DNA"/>
</dbReference>
<dbReference type="EMBL" id="CH471164">
    <property type="protein sequence ID" value="EAW59283.1"/>
    <property type="molecule type" value="Genomic_DNA"/>
</dbReference>
<dbReference type="EMBL" id="BC003089">
    <property type="protein sequence ID" value="AAH03089.1"/>
    <property type="molecule type" value="mRNA"/>
</dbReference>
<dbReference type="EMBL" id="BC004181">
    <property type="protein sequence ID" value="AAH04181.1"/>
    <property type="molecule type" value="mRNA"/>
</dbReference>
<dbReference type="EMBL" id="BC008733">
    <property type="protein sequence ID" value="AAH08733.1"/>
    <property type="molecule type" value="mRNA"/>
</dbReference>
<dbReference type="EMBL" id="BC024153">
    <property type="protein sequence ID" value="AAH24153.1"/>
    <property type="molecule type" value="mRNA"/>
</dbReference>
<dbReference type="EMBL" id="U35373">
    <property type="protein sequence ID" value="AAB33572.1"/>
    <property type="status" value="ALT_FRAME"/>
    <property type="molecule type" value="mRNA"/>
</dbReference>
<dbReference type="CCDS" id="CCDS14274.1">
    <molecule id="P98175-1"/>
</dbReference>
<dbReference type="CCDS" id="CCDS56600.1">
    <molecule id="P98175-3"/>
</dbReference>
<dbReference type="CCDS" id="CCDS75969.1">
    <molecule id="P98175-5"/>
</dbReference>
<dbReference type="CCDS" id="CCDS78478.1">
    <molecule id="P98175-4"/>
</dbReference>
<dbReference type="RefSeq" id="NP_001191395.1">
    <molecule id="P98175-3"/>
    <property type="nucleotide sequence ID" value="NM_001204466.2"/>
</dbReference>
<dbReference type="RefSeq" id="NP_001191396.1">
    <molecule id="P98175-2"/>
    <property type="nucleotide sequence ID" value="NM_001204467.2"/>
</dbReference>
<dbReference type="RefSeq" id="NP_001191397.1">
    <molecule id="P98175-5"/>
    <property type="nucleotide sequence ID" value="NM_001204468.2"/>
</dbReference>
<dbReference type="RefSeq" id="NP_005667.2">
    <molecule id="P98175-1"/>
    <property type="nucleotide sequence ID" value="NM_005676.4"/>
</dbReference>
<dbReference type="RefSeq" id="NP_690595.1">
    <molecule id="P98175-4"/>
    <property type="nucleotide sequence ID" value="NM_152856.3"/>
</dbReference>
<dbReference type="PDB" id="2LXI">
    <property type="method" value="NMR"/>
    <property type="chains" value="A=128-218"/>
</dbReference>
<dbReference type="PDB" id="2M2B">
    <property type="method" value="NMR"/>
    <property type="chains" value="A=277-408"/>
</dbReference>
<dbReference type="PDB" id="2MXV">
    <property type="method" value="NMR"/>
    <property type="chains" value="A=211-250"/>
</dbReference>
<dbReference type="PDB" id="2MXW">
    <property type="method" value="NMR"/>
    <property type="chains" value="A=558-646"/>
</dbReference>
<dbReference type="PDB" id="5ZSW">
    <property type="method" value="NMR"/>
    <property type="chains" value="A=300-385"/>
</dbReference>
<dbReference type="PDB" id="5ZSY">
    <property type="method" value="NMR"/>
    <property type="chains" value="A=300-385"/>
</dbReference>
<dbReference type="PDBsum" id="2LXI"/>
<dbReference type="PDBsum" id="2M2B"/>
<dbReference type="PDBsum" id="2MXV"/>
<dbReference type="PDBsum" id="2MXW"/>
<dbReference type="PDBsum" id="5ZSW"/>
<dbReference type="PDBsum" id="5ZSY"/>
<dbReference type="BMRB" id="P98175"/>
<dbReference type="SMR" id="P98175"/>
<dbReference type="BioGRID" id="113869">
    <property type="interactions" value="274"/>
</dbReference>
<dbReference type="CORUM" id="P98175"/>
<dbReference type="FunCoup" id="P98175">
    <property type="interactions" value="3845"/>
</dbReference>
<dbReference type="IntAct" id="P98175">
    <property type="interactions" value="121"/>
</dbReference>
<dbReference type="MINT" id="P98175"/>
<dbReference type="STRING" id="9606.ENSP00000328848"/>
<dbReference type="MoonDB" id="P98175">
    <property type="type" value="Predicted"/>
</dbReference>
<dbReference type="GlyCosmos" id="P98175">
    <property type="glycosylation" value="1 site, 1 glycan"/>
</dbReference>
<dbReference type="GlyGen" id="P98175">
    <property type="glycosylation" value="4 sites, 1 O-linked glycan (4 sites)"/>
</dbReference>
<dbReference type="iPTMnet" id="P98175"/>
<dbReference type="MetOSite" id="P98175"/>
<dbReference type="PhosphoSitePlus" id="P98175"/>
<dbReference type="BioMuta" id="RBM10"/>
<dbReference type="DMDM" id="218512116"/>
<dbReference type="jPOST" id="P98175"/>
<dbReference type="MassIVE" id="P98175"/>
<dbReference type="PaxDb" id="9606-ENSP00000328848"/>
<dbReference type="PeptideAtlas" id="P98175"/>
<dbReference type="ProteomicsDB" id="57810">
    <molecule id="P98175-1"/>
</dbReference>
<dbReference type="ProteomicsDB" id="57811">
    <molecule id="P98175-2"/>
</dbReference>
<dbReference type="ProteomicsDB" id="57812">
    <molecule id="P98175-3"/>
</dbReference>
<dbReference type="ProteomicsDB" id="57813">
    <molecule id="P98175-4"/>
</dbReference>
<dbReference type="Pumba" id="P98175"/>
<dbReference type="Antibodypedia" id="11142">
    <property type="antibodies" value="200 antibodies from 29 providers"/>
</dbReference>
<dbReference type="DNASU" id="8241"/>
<dbReference type="Ensembl" id="ENST00000329236.8">
    <molecule id="P98175-5"/>
    <property type="protein sequence ID" value="ENSP00000328848.8"/>
    <property type="gene ID" value="ENSG00000182872.16"/>
</dbReference>
<dbReference type="Ensembl" id="ENST00000345781.10">
    <molecule id="P98175-3"/>
    <property type="protein sequence ID" value="ENSP00000329659.6"/>
    <property type="gene ID" value="ENSG00000182872.16"/>
</dbReference>
<dbReference type="Ensembl" id="ENST00000377604.8">
    <molecule id="P98175-1"/>
    <property type="protein sequence ID" value="ENSP00000366829.3"/>
    <property type="gene ID" value="ENSG00000182872.16"/>
</dbReference>
<dbReference type="Ensembl" id="ENST00000628161.2">
    <molecule id="P98175-4"/>
    <property type="protein sequence ID" value="ENSP00000486115.1"/>
    <property type="gene ID" value="ENSG00000182872.16"/>
</dbReference>
<dbReference type="GeneID" id="8241"/>
<dbReference type="KEGG" id="hsa:8241"/>
<dbReference type="MANE-Select" id="ENST00000377604.8">
    <property type="protein sequence ID" value="ENSP00000366829.3"/>
    <property type="RefSeq nucleotide sequence ID" value="NM_005676.5"/>
    <property type="RefSeq protein sequence ID" value="NP_005667.2"/>
</dbReference>
<dbReference type="UCSC" id="uc004dhf.4">
    <molecule id="P98175-1"/>
    <property type="organism name" value="human"/>
</dbReference>
<dbReference type="UCSC" id="uc004dhi.4">
    <property type="organism name" value="human"/>
</dbReference>
<dbReference type="AGR" id="HGNC:9896"/>
<dbReference type="CTD" id="8241"/>
<dbReference type="DisGeNET" id="8241"/>
<dbReference type="GeneCards" id="RBM10"/>
<dbReference type="HGNC" id="HGNC:9896">
    <property type="gene designation" value="RBM10"/>
</dbReference>
<dbReference type="HPA" id="ENSG00000182872">
    <property type="expression patterns" value="Low tissue specificity"/>
</dbReference>
<dbReference type="MalaCards" id="RBM10"/>
<dbReference type="MIM" id="300080">
    <property type="type" value="gene"/>
</dbReference>
<dbReference type="MIM" id="311900">
    <property type="type" value="phenotype"/>
</dbReference>
<dbReference type="neXtProt" id="NX_P98175"/>
<dbReference type="OpenTargets" id="ENSG00000182872"/>
<dbReference type="Orphanet" id="2886">
    <property type="disease" value="TARP syndrome"/>
</dbReference>
<dbReference type="PharmGKB" id="PA34259"/>
<dbReference type="VEuPathDB" id="HostDB:ENSG00000182872"/>
<dbReference type="eggNOG" id="KOG0154">
    <property type="taxonomic scope" value="Eukaryota"/>
</dbReference>
<dbReference type="GeneTree" id="ENSGT00940000160369"/>
<dbReference type="InParanoid" id="P98175"/>
<dbReference type="OMA" id="CESEHER"/>
<dbReference type="OrthoDB" id="29221at2759"/>
<dbReference type="PAN-GO" id="P98175">
    <property type="GO annotations" value="3 GO annotations based on evolutionary models"/>
</dbReference>
<dbReference type="PhylomeDB" id="P98175"/>
<dbReference type="TreeFam" id="TF315789"/>
<dbReference type="PathwayCommons" id="P98175"/>
<dbReference type="Reactome" id="R-HSA-72163">
    <property type="pathway name" value="mRNA Splicing - Major Pathway"/>
</dbReference>
<dbReference type="Reactome" id="R-HSA-72203">
    <property type="pathway name" value="Processing of Capped Intron-Containing Pre-mRNA"/>
</dbReference>
<dbReference type="SignaLink" id="P98175"/>
<dbReference type="SIGNOR" id="P98175"/>
<dbReference type="BioGRID-ORCS" id="8241">
    <property type="hits" value="143 hits in 804 CRISPR screens"/>
</dbReference>
<dbReference type="CD-CODE" id="232F8A39">
    <property type="entry name" value="P-body"/>
</dbReference>
<dbReference type="ChiTaRS" id="RBM10">
    <property type="organism name" value="human"/>
</dbReference>
<dbReference type="EvolutionaryTrace" id="P98175"/>
<dbReference type="GeneWiki" id="RBM10"/>
<dbReference type="GenomeRNAi" id="8241"/>
<dbReference type="Pharos" id="P98175">
    <property type="development level" value="Tbio"/>
</dbReference>
<dbReference type="PRO" id="PR:P98175"/>
<dbReference type="Proteomes" id="UP000005640">
    <property type="component" value="Chromosome X"/>
</dbReference>
<dbReference type="RNAct" id="P98175">
    <property type="molecule type" value="protein"/>
</dbReference>
<dbReference type="Bgee" id="ENSG00000182872">
    <property type="expression patterns" value="Expressed in right hemisphere of cerebellum and 195 other cell types or tissues"/>
</dbReference>
<dbReference type="ExpressionAtlas" id="P98175">
    <property type="expression patterns" value="baseline and differential"/>
</dbReference>
<dbReference type="GO" id="GO:0016607">
    <property type="term" value="C:nuclear speck"/>
    <property type="evidence" value="ECO:0000314"/>
    <property type="project" value="HPA"/>
</dbReference>
<dbReference type="GO" id="GO:0005654">
    <property type="term" value="C:nucleoplasm"/>
    <property type="evidence" value="ECO:0000304"/>
    <property type="project" value="Reactome"/>
</dbReference>
<dbReference type="GO" id="GO:0005634">
    <property type="term" value="C:nucleus"/>
    <property type="evidence" value="ECO:0000314"/>
    <property type="project" value="LIFEdb"/>
</dbReference>
<dbReference type="GO" id="GO:0032991">
    <property type="term" value="C:protein-containing complex"/>
    <property type="evidence" value="ECO:0000353"/>
    <property type="project" value="UniProtKB"/>
</dbReference>
<dbReference type="GO" id="GO:0042802">
    <property type="term" value="F:identical protein binding"/>
    <property type="evidence" value="ECO:0000353"/>
    <property type="project" value="IntAct"/>
</dbReference>
<dbReference type="GO" id="GO:0035198">
    <property type="term" value="F:miRNA binding"/>
    <property type="evidence" value="ECO:0000314"/>
    <property type="project" value="UniProtKB"/>
</dbReference>
<dbReference type="GO" id="GO:0003723">
    <property type="term" value="F:RNA binding"/>
    <property type="evidence" value="ECO:0007005"/>
    <property type="project" value="UniProtKB"/>
</dbReference>
<dbReference type="GO" id="GO:0008270">
    <property type="term" value="F:zinc ion binding"/>
    <property type="evidence" value="ECO:0007669"/>
    <property type="project" value="UniProtKB-KW"/>
</dbReference>
<dbReference type="GO" id="GO:0070935">
    <property type="term" value="P:3'-UTR-mediated mRNA stabilization"/>
    <property type="evidence" value="ECO:0007669"/>
    <property type="project" value="Ensembl"/>
</dbReference>
<dbReference type="GO" id="GO:0000398">
    <property type="term" value="P:mRNA splicing, via spliceosome"/>
    <property type="evidence" value="ECO:0000318"/>
    <property type="project" value="GO_Central"/>
</dbReference>
<dbReference type="GO" id="GO:0048025">
    <property type="term" value="P:negative regulation of mRNA splicing, via spliceosome"/>
    <property type="evidence" value="ECO:0007669"/>
    <property type="project" value="Ensembl"/>
</dbReference>
<dbReference type="GO" id="GO:0000122">
    <property type="term" value="P:negative regulation of transcription by RNA polymerase II"/>
    <property type="evidence" value="ECO:0007669"/>
    <property type="project" value="Ensembl"/>
</dbReference>
<dbReference type="GO" id="GO:1904706">
    <property type="term" value="P:negative regulation of vascular associated smooth muscle cell proliferation"/>
    <property type="evidence" value="ECO:0007669"/>
    <property type="project" value="Ensembl"/>
</dbReference>
<dbReference type="GO" id="GO:1905461">
    <property type="term" value="P:positive regulation of vascular associated smooth muscle cell apoptotic process"/>
    <property type="evidence" value="ECO:0007669"/>
    <property type="project" value="Ensembl"/>
</dbReference>
<dbReference type="GO" id="GO:1905288">
    <property type="term" value="P:vascular associated smooth muscle cell apoptotic process"/>
    <property type="evidence" value="ECO:0007669"/>
    <property type="project" value="Ensembl"/>
</dbReference>
<dbReference type="GO" id="GO:1990874">
    <property type="term" value="P:vascular associated smooth muscle cell proliferation"/>
    <property type="evidence" value="ECO:0007669"/>
    <property type="project" value="Ensembl"/>
</dbReference>
<dbReference type="CDD" id="cd16167">
    <property type="entry name" value="OCRE_RBM10"/>
    <property type="match status" value="1"/>
</dbReference>
<dbReference type="CDD" id="cd12753">
    <property type="entry name" value="RRM1_RBM10"/>
    <property type="match status" value="1"/>
</dbReference>
<dbReference type="CDD" id="cd12754">
    <property type="entry name" value="RRM2_RBM10"/>
    <property type="match status" value="1"/>
</dbReference>
<dbReference type="FunFam" id="3.30.70.330:FF:000110">
    <property type="entry name" value="RNA-binding protein 10 isoform X1"/>
    <property type="match status" value="1"/>
</dbReference>
<dbReference type="FunFam" id="3.30.70.330:FF:000114">
    <property type="entry name" value="RNA-binding protein 10 isoform X1"/>
    <property type="match status" value="1"/>
</dbReference>
<dbReference type="FunFam" id="4.10.1060.10:FF:000005">
    <property type="entry name" value="RNA-binding protein 10 isoform X2"/>
    <property type="match status" value="1"/>
</dbReference>
<dbReference type="Gene3D" id="3.30.70.330">
    <property type="match status" value="2"/>
</dbReference>
<dbReference type="Gene3D" id="4.10.1060.10">
    <property type="entry name" value="Zinc finger, RanBP2-type"/>
    <property type="match status" value="1"/>
</dbReference>
<dbReference type="InterPro" id="IPR000467">
    <property type="entry name" value="G_patch_dom"/>
</dbReference>
<dbReference type="InterPro" id="IPR012677">
    <property type="entry name" value="Nucleotide-bd_a/b_plait_sf"/>
</dbReference>
<dbReference type="InterPro" id="IPR041591">
    <property type="entry name" value="OCRE"/>
</dbReference>
<dbReference type="InterPro" id="IPR035979">
    <property type="entry name" value="RBD_domain_sf"/>
</dbReference>
<dbReference type="InterPro" id="IPR035618">
    <property type="entry name" value="RBM10_OCRE"/>
</dbReference>
<dbReference type="InterPro" id="IPR034992">
    <property type="entry name" value="RBM10_RRM2"/>
</dbReference>
<dbReference type="InterPro" id="IPR000504">
    <property type="entry name" value="RRM_dom"/>
</dbReference>
<dbReference type="InterPro" id="IPR013087">
    <property type="entry name" value="Znf_C2H2_type"/>
</dbReference>
<dbReference type="InterPro" id="IPR001876">
    <property type="entry name" value="Znf_RanBP2"/>
</dbReference>
<dbReference type="InterPro" id="IPR036443">
    <property type="entry name" value="Znf_RanBP2_sf"/>
</dbReference>
<dbReference type="PANTHER" id="PTHR13948">
    <property type="entry name" value="RNA-BINDING PROTEIN"/>
    <property type="match status" value="1"/>
</dbReference>
<dbReference type="PANTHER" id="PTHR13948:SF4">
    <property type="entry name" value="RNA-BINDING PROTEIN 10"/>
    <property type="match status" value="1"/>
</dbReference>
<dbReference type="Pfam" id="PF01585">
    <property type="entry name" value="G-patch"/>
    <property type="match status" value="1"/>
</dbReference>
<dbReference type="Pfam" id="PF17780">
    <property type="entry name" value="OCRE"/>
    <property type="match status" value="1"/>
</dbReference>
<dbReference type="Pfam" id="PF00076">
    <property type="entry name" value="RRM_1"/>
    <property type="match status" value="1"/>
</dbReference>
<dbReference type="Pfam" id="PF00641">
    <property type="entry name" value="Zn_ribbon_RanBP"/>
    <property type="match status" value="1"/>
</dbReference>
<dbReference type="SMART" id="SM00443">
    <property type="entry name" value="G_patch"/>
    <property type="match status" value="1"/>
</dbReference>
<dbReference type="SMART" id="SM00360">
    <property type="entry name" value="RRM"/>
    <property type="match status" value="2"/>
</dbReference>
<dbReference type="SMART" id="SM00547">
    <property type="entry name" value="ZnF_RBZ"/>
    <property type="match status" value="1"/>
</dbReference>
<dbReference type="SUPFAM" id="SSF90209">
    <property type="entry name" value="Ran binding protein zinc finger-like"/>
    <property type="match status" value="1"/>
</dbReference>
<dbReference type="SUPFAM" id="SSF54928">
    <property type="entry name" value="RNA-binding domain, RBD"/>
    <property type="match status" value="2"/>
</dbReference>
<dbReference type="PROSITE" id="PS50174">
    <property type="entry name" value="G_PATCH"/>
    <property type="match status" value="1"/>
</dbReference>
<dbReference type="PROSITE" id="PS50102">
    <property type="entry name" value="RRM"/>
    <property type="match status" value="2"/>
</dbReference>
<dbReference type="PROSITE" id="PS01358">
    <property type="entry name" value="ZF_RANBP2_1"/>
    <property type="match status" value="1"/>
</dbReference>
<dbReference type="PROSITE" id="PS50199">
    <property type="entry name" value="ZF_RANBP2_2"/>
    <property type="match status" value="1"/>
</dbReference>
<dbReference type="PROSITE" id="PS50157">
    <property type="entry name" value="ZINC_FINGER_C2H2_2"/>
    <property type="match status" value="1"/>
</dbReference>
<comment type="function">
    <text evidence="1 9 11 12">Binds to ssRNA containing the consensus sequence 5'-AGGUAA-3' (PubMed:21256132). May be involved in post-transcriptional processing, most probably in mRNA splicing (PubMed:18315527). Binds to RNA homopolymers, with a preference for poly(G) and poly(U) and little for poly(A) (By similarity). May bind to specific miRNA hairpins (PubMed:28431233).</text>
</comment>
<comment type="subunit">
    <text evidence="8">Associates with the spliceosome. Component of a large chromatin remodeling complex, at least composed of MYSM1, PCAF, RBM10 and KIF11/TRIP5.</text>
</comment>
<comment type="interaction">
    <interactant intactId="EBI-721525">
        <id>P98175</id>
    </interactant>
    <interactant intactId="EBI-742750">
        <id>Q8TBE0</id>
        <label>BAHD1</label>
    </interactant>
    <organismsDiffer>false</organismsDiffer>
    <experiments>3</experiments>
</comment>
<comment type="interaction">
    <interactant intactId="EBI-721525">
        <id>P98175</id>
    </interactant>
    <interactant intactId="EBI-10181188">
        <id>Q8N7W2-2</id>
        <label>BEND7</label>
    </interactant>
    <organismsDiffer>false</organismsDiffer>
    <experiments>3</experiments>
</comment>
<comment type="interaction">
    <interactant intactId="EBI-721525">
        <id>P98175</id>
    </interactant>
    <interactant intactId="EBI-2832762">
        <id>Q75N03</id>
        <label>CBLL1</label>
    </interactant>
    <organismsDiffer>false</organismsDiffer>
    <experiments>3</experiments>
</comment>
<comment type="interaction">
    <interactant intactId="EBI-721525">
        <id>P98175</id>
    </interactant>
    <interactant intactId="EBI-356265">
        <id>Q8IX12</id>
        <label>CCAR1</label>
    </interactant>
    <organismsDiffer>false</organismsDiffer>
    <experiments>2</experiments>
</comment>
<comment type="interaction">
    <interactant intactId="EBI-721525">
        <id>P98175</id>
    </interactant>
    <interactant intactId="EBI-739624">
        <id>Q8NHQ1</id>
        <label>CEP70</label>
    </interactant>
    <organismsDiffer>false</organismsDiffer>
    <experiments>6</experiments>
</comment>
<comment type="interaction">
    <interactant intactId="EBI-721525">
        <id>P98175</id>
    </interactant>
    <interactant intactId="EBI-11523759">
        <id>Q8N684-3</id>
        <label>CPSF7</label>
    </interactant>
    <organismsDiffer>false</organismsDiffer>
    <experiments>6</experiments>
</comment>
<comment type="interaction">
    <interactant intactId="EBI-721525">
        <id>P98175</id>
    </interactant>
    <interactant intactId="EBI-746012">
        <id>Q92841</id>
        <label>DDX17</label>
    </interactant>
    <organismsDiffer>false</organismsDiffer>
    <experiments>6</experiments>
</comment>
<comment type="interaction">
    <interactant intactId="EBI-721525">
        <id>P98175</id>
    </interactant>
    <interactant intactId="EBI-1237044">
        <id>O43143</id>
        <label>DHX15</label>
    </interactant>
    <organismsDiffer>false</organismsDiffer>
    <experiments>3</experiments>
</comment>
<comment type="interaction">
    <interactant intactId="EBI-721525">
        <id>P98175</id>
    </interactant>
    <interactant intactId="EBI-1043041">
        <id>Q92620</id>
        <label>DHX38</label>
    </interactant>
    <organismsDiffer>false</organismsDiffer>
    <experiments>2</experiments>
</comment>
<comment type="interaction">
    <interactant intactId="EBI-721525">
        <id>P98175</id>
    </interactant>
    <interactant intactId="EBI-746309">
        <id>Q92917</id>
        <label>GPKOW</label>
    </interactant>
    <organismsDiffer>false</organismsDiffer>
    <experiments>2</experiments>
</comment>
<comment type="interaction">
    <interactant intactId="EBI-721525">
        <id>P98175</id>
    </interactant>
    <interactant intactId="EBI-713456">
        <id>Q13123</id>
        <label>IK</label>
    </interactant>
    <organismsDiffer>false</organismsDiffer>
    <experiments>2</experiments>
</comment>
<comment type="interaction">
    <interactant intactId="EBI-721525">
        <id>P98175</id>
    </interactant>
    <interactant intactId="EBI-742808">
        <id>Q5VWX1</id>
        <label>KHDRBS2</label>
    </interactant>
    <organismsDiffer>false</organismsDiffer>
    <experiments>3</experiments>
</comment>
<comment type="interaction">
    <interactant intactId="EBI-721525">
        <id>P98175</id>
    </interactant>
    <interactant intactId="EBI-8284732">
        <id>Q13351</id>
        <label>KLF1</label>
    </interactant>
    <organismsDiffer>false</organismsDiffer>
    <experiments>3</experiments>
</comment>
<comment type="interaction">
    <interactant intactId="EBI-721525">
        <id>P98175</id>
    </interactant>
    <interactant intactId="EBI-719591">
        <id>Q96DN6</id>
        <label>MBD6</label>
    </interactant>
    <organismsDiffer>false</organismsDiffer>
    <experiments>3</experiments>
</comment>
<comment type="interaction">
    <interactant intactId="EBI-721525">
        <id>P98175</id>
    </interactant>
    <interactant intactId="EBI-16439278">
        <id>Q6FHY5</id>
        <label>MEOX2</label>
    </interactant>
    <organismsDiffer>false</organismsDiffer>
    <experiments>3</experiments>
</comment>
<comment type="interaction">
    <interactant intactId="EBI-721525">
        <id>P98175</id>
    </interactant>
    <interactant intactId="EBI-11022007">
        <id>Q9HBE1-4</id>
        <label>PATZ1</label>
    </interactant>
    <organismsDiffer>false</organismsDiffer>
    <experiments>3</experiments>
</comment>
<comment type="interaction">
    <interactant intactId="EBI-721525">
        <id>P98175</id>
    </interactant>
    <interactant intactId="EBI-3957793">
        <id>Q9GZV8</id>
        <label>PRDM14</label>
    </interactant>
    <organismsDiffer>false</organismsDiffer>
    <experiments>6</experiments>
</comment>
<comment type="interaction">
    <interactant intactId="EBI-721525">
        <id>P98175</id>
    </interactant>
    <interactant intactId="EBI-395746">
        <id>Q9UMS4</id>
        <label>PRPF19</label>
    </interactant>
    <organismsDiffer>false</organismsDiffer>
    <experiments>2</experiments>
</comment>
<comment type="interaction">
    <interactant intactId="EBI-721525">
        <id>P98175</id>
    </interactant>
    <interactant intactId="EBI-12700196">
        <id>P86478</id>
        <label>PRR20E</label>
    </interactant>
    <organismsDiffer>false</organismsDiffer>
    <experiments>3</experiments>
</comment>
<comment type="interaction">
    <interactant intactId="EBI-721525">
        <id>P98175</id>
    </interactant>
    <interactant intactId="EBI-350540">
        <id>P26599</id>
        <label>PTBP1</label>
    </interactant>
    <organismsDiffer>false</organismsDiffer>
    <experiments>4</experiments>
</comment>
<comment type="interaction">
    <interactant intactId="EBI-721525">
        <id>P98175</id>
    </interactant>
    <interactant intactId="EBI-16437588">
        <id>P26599-3</id>
        <label>PTBP1</label>
    </interactant>
    <organismsDiffer>false</organismsDiffer>
    <experiments>3</experiments>
</comment>
<comment type="interaction">
    <interactant intactId="EBI-721525">
        <id>P98175</id>
    </interactant>
    <interactant intactId="EBI-12255608">
        <id>Q9UKA9-2</id>
        <label>PTBP2</label>
    </interactant>
    <organismsDiffer>false</organismsDiffer>
    <experiments>3</experiments>
</comment>
<comment type="interaction">
    <interactant intactId="EBI-721525">
        <id>P98175</id>
    </interactant>
    <interactant intactId="EBI-721525">
        <id>P98175</id>
        <label>RBM10</label>
    </interactant>
    <organismsDiffer>false</organismsDiffer>
    <experiments>2</experiments>
</comment>
<comment type="interaction">
    <interactant intactId="EBI-721525">
        <id>P98175</id>
    </interactant>
    <interactant intactId="EBI-8642021">
        <id>Q15415</id>
        <label>RBMY1J</label>
    </interactant>
    <organismsDiffer>false</organismsDiffer>
    <experiments>3</experiments>
</comment>
<comment type="interaction">
    <interactant intactId="EBI-721525">
        <id>P98175</id>
    </interactant>
    <interactant intactId="EBI-1054743">
        <id>Q15459</id>
        <label>SF3A1</label>
    </interactant>
    <organismsDiffer>false</organismsDiffer>
    <experiments>2</experiments>
</comment>
<comment type="interaction">
    <interactant intactId="EBI-721525">
        <id>P98175</id>
    </interactant>
    <interactant intactId="EBI-348469">
        <id>Q15427</id>
        <label>SF3B4</label>
    </interactant>
    <organismsDiffer>false</organismsDiffer>
    <experiments>8</experiments>
</comment>
<comment type="interaction">
    <interactant intactId="EBI-721525">
        <id>P98175</id>
    </interactant>
    <interactant intactId="EBI-766589">
        <id>P09234</id>
        <label>SNRPC</label>
    </interactant>
    <organismsDiffer>false</organismsDiffer>
    <experiments>2</experiments>
</comment>
<comment type="interaction">
    <interactant intactId="EBI-721525">
        <id>P98175</id>
    </interactant>
    <interactant intactId="EBI-2691671">
        <id>Q8IWZ8</id>
        <label>SUGP1</label>
    </interactant>
    <organismsDiffer>false</organismsDiffer>
    <experiments>2</experiments>
</comment>
<comment type="interaction">
    <interactant intactId="EBI-721525">
        <id>P98175</id>
    </interactant>
    <interactant intactId="EBI-372899">
        <id>Q13148</id>
        <label>TARDBP</label>
    </interactant>
    <organismsDiffer>false</organismsDiffer>
    <experiments>3</experiments>
</comment>
<comment type="interaction">
    <interactant intactId="EBI-721525">
        <id>P98175</id>
    </interactant>
    <interactant intactId="EBI-8787464">
        <id>Q9NU19</id>
        <label>TBC1D22B</label>
    </interactant>
    <organismsDiffer>false</organismsDiffer>
    <experiments>3</experiments>
</comment>
<comment type="interaction">
    <interactant intactId="EBI-721525">
        <id>P98175</id>
    </interactant>
    <interactant intactId="EBI-741515">
        <id>Q9NVV9</id>
        <label>THAP1</label>
    </interactant>
    <organismsDiffer>false</organismsDiffer>
    <experiments>6</experiments>
</comment>
<comment type="interaction">
    <interactant intactId="EBI-721525">
        <id>P98175</id>
    </interactant>
    <interactant intactId="EBI-717810">
        <id>Q08117</id>
        <label>TLE5</label>
    </interactant>
    <organismsDiffer>false</organismsDiffer>
    <experiments>3</experiments>
</comment>
<comment type="interaction">
    <interactant intactId="EBI-721525">
        <id>P98175</id>
    </interactant>
    <interactant intactId="EBI-742339">
        <id>P26368</id>
        <label>U2AF2</label>
    </interactant>
    <organismsDiffer>false</organismsDiffer>
    <experiments>3</experiments>
</comment>
<comment type="interaction">
    <interactant intactId="EBI-721525">
        <id>P98175</id>
    </interactant>
    <interactant intactId="EBI-310697">
        <id>O15042</id>
        <label>U2SURP</label>
    </interactant>
    <organismsDiffer>false</organismsDiffer>
    <experiments>2</experiments>
</comment>
<comment type="interaction">
    <interactant intactId="EBI-721525">
        <id>P98175</id>
    </interactant>
    <interactant intactId="EBI-744471">
        <id>O43167</id>
        <label>ZBTB24</label>
    </interactant>
    <organismsDiffer>false</organismsDiffer>
    <experiments>3</experiments>
</comment>
<comment type="interaction">
    <interactant intactId="EBI-721525">
        <id>P98175</id>
    </interactant>
    <interactant intactId="EBI-711679">
        <id>Q9NTW7</id>
        <label>ZFP64</label>
    </interactant>
    <organismsDiffer>false</organismsDiffer>
    <experiments>3</experiments>
</comment>
<comment type="interaction">
    <interactant intactId="EBI-721525">
        <id>P98175</id>
    </interactant>
    <interactant intactId="EBI-17263125">
        <id>Q9NSD4</id>
        <label>ZNF275</label>
    </interactant>
    <organismsDiffer>false</organismsDiffer>
    <experiments>3</experiments>
</comment>
<comment type="interaction">
    <interactant intactId="EBI-721525">
        <id>P98175</id>
    </interactant>
    <interactant intactId="EBI-1210473">
        <id>Q96PQ6</id>
        <label>ZNF317</label>
    </interactant>
    <organismsDiffer>false</organismsDiffer>
    <experiments>3</experiments>
</comment>
<comment type="interaction">
    <interactant intactId="EBI-721525">
        <id>P98175</id>
    </interactant>
    <interactant intactId="EBI-347633">
        <id>Q9H9D4</id>
        <label>ZNF408</label>
    </interactant>
    <organismsDiffer>false</organismsDiffer>
    <experiments>3</experiments>
</comment>
<comment type="interaction">
    <interactant intactId="EBI-721525">
        <id>P98175</id>
    </interactant>
    <interactant intactId="EBI-751409">
        <id>Q8WTR7</id>
        <label>ZNF473</label>
    </interactant>
    <organismsDiffer>false</organismsDiffer>
    <experiments>3</experiments>
</comment>
<comment type="interaction">
    <interactant intactId="EBI-721525">
        <id>P98175</id>
    </interactant>
    <interactant intactId="EBI-11035148">
        <id>Q8TF50</id>
        <label>ZNF526</label>
    </interactant>
    <organismsDiffer>false</organismsDiffer>
    <experiments>3</experiments>
</comment>
<comment type="subcellular location">
    <subcellularLocation>
        <location evidence="9">Nucleus</location>
    </subcellularLocation>
    <text>In the extranucleolar nucleoplasm constitutes hundreds of nuclear domains, which dynamically change their structures in a reversible manner. Upon globally reducing RNA polymerase II transcription, the nuclear bodies enlarge and decrease in number. They occur closely adjacent to nuclear speckles or IGCs (interchromatin granule clusters) but coincide with TIDRs (transcription-inactivation-dependent RNA domains).</text>
</comment>
<comment type="alternative products">
    <event type="alternative splicing"/>
    <event type="alternative initiation"/>
    <isoform>
        <id>P98175-1</id>
        <name>1</name>
        <sequence type="displayed"/>
    </isoform>
    <isoform>
        <id>P98175-2</id>
        <name>2</name>
        <sequence type="described" ref="VSP_036035"/>
    </isoform>
    <isoform>
        <id>P98175-3</id>
        <name>3</name>
        <sequence type="described" ref="VSP_036173"/>
    </isoform>
    <isoform>
        <id>P98175-4</id>
        <name>4</name>
        <sequence type="described" ref="VSP_036173 VSP_036035"/>
    </isoform>
    <isoform>
        <id>P98175-5</id>
        <name>5</name>
        <sequence type="described" ref="VSP_059341"/>
    </isoform>
    <isoform>
        <id>P0DW28-1</id>
        <name>Ribosome biogenesis inhibitor MINAS-60</name>
        <sequence type="external"/>
    </isoform>
</comment>
<comment type="disease" evidence="10">
    <disease id="DI-02837">
        <name>TARP syndrome</name>
        <acronym>TARPS</acronym>
        <description>A disorder characterized by the Robin sequence (micrognathia, glossoptosis and cleft palate), talipes equinovarus and cardiac defects.</description>
        <dbReference type="MIM" id="311900"/>
    </disease>
    <text>The disease is caused by variants affecting the gene represented in this entry.</text>
</comment>
<comment type="miscellaneous">
    <text evidence="16">RBM10 transcripts also code for an alternative open reading frame (alt-ORF) coding for the MINAS-60 (AC P0DW28) protein (Probable). MINAS-60 and RBM10 ORFs are overlapping and are formed by shifting the reading frame (Probable).</text>
</comment>
<comment type="sequence caution" evidence="16">
    <conflict type="frameshift">
        <sequence resource="EMBL-CDS" id="AAB33572"/>
    </conflict>
</comment>
<comment type="sequence caution" evidence="16">
    <conflict type="erroneous initiation">
        <sequence resource="EMBL-CDS" id="BAA09471"/>
    </conflict>
</comment>
<comment type="sequence caution" evidence="16">
    <conflict type="erroneous initiation">
        <sequence resource="EMBL-CDS" id="CAB70731"/>
    </conflict>
    <text>Truncated N-terminus.</text>
</comment>
<comment type="sequence caution" evidence="16">
    <conflict type="frameshift">
        <sequence resource="EMBL-CDS" id="CAB70731"/>
    </conflict>
</comment>
<organism>
    <name type="scientific">Homo sapiens</name>
    <name type="common">Human</name>
    <dbReference type="NCBI Taxonomy" id="9606"/>
    <lineage>
        <taxon>Eukaryota</taxon>
        <taxon>Metazoa</taxon>
        <taxon>Chordata</taxon>
        <taxon>Craniata</taxon>
        <taxon>Vertebrata</taxon>
        <taxon>Euteleostomi</taxon>
        <taxon>Mammalia</taxon>
        <taxon>Eutheria</taxon>
        <taxon>Euarchontoglires</taxon>
        <taxon>Primates</taxon>
        <taxon>Haplorrhini</taxon>
        <taxon>Catarrhini</taxon>
        <taxon>Hominidae</taxon>
        <taxon>Homo</taxon>
    </lineage>
</organism>
<gene>
    <name evidence="17" type="primary">RBM10</name>
    <name type="synonym">DXS8237E</name>
    <name type="synonym">GPATC9</name>
    <name type="synonym">GPATCH9</name>
    <name type="synonym">KIAA0122</name>
</gene>